<accession>C4KJ83</accession>
<gene>
    <name evidence="1" type="primary">pelA</name>
    <name type="ordered locus">M164_2045</name>
</gene>
<name>PELO_SACI6</name>
<comment type="function">
    <text evidence="1">May function in recognizing stalled ribosomes, interact with stem-loop structures in stalled mRNA molecules, and effect endonucleolytic cleavage of the mRNA. May play a role in the release non-functional ribosomes and degradation of damaged mRNAs. Has endoribonuclease activity.</text>
</comment>
<comment type="cofactor">
    <cofactor evidence="1">
        <name>a divalent metal cation</name>
        <dbReference type="ChEBI" id="CHEBI:60240"/>
    </cofactor>
</comment>
<comment type="subunit">
    <text evidence="1">Monomer.</text>
</comment>
<comment type="subcellular location">
    <subcellularLocation>
        <location evidence="1">Cytoplasm</location>
    </subcellularLocation>
</comment>
<comment type="domain">
    <text evidence="1">The N-terminal domain has the RNA-binding Sm fold. It harbors the endoribonuclease activity.</text>
</comment>
<comment type="similarity">
    <text evidence="1">Belongs to the eukaryotic release factor 1 family. Pelota subfamily.</text>
</comment>
<evidence type="ECO:0000255" key="1">
    <source>
        <dbReference type="HAMAP-Rule" id="MF_01853"/>
    </source>
</evidence>
<dbReference type="EC" id="3.1.-.-" evidence="1"/>
<dbReference type="EMBL" id="CP001402">
    <property type="protein sequence ID" value="ACR42647.1"/>
    <property type="molecule type" value="Genomic_DNA"/>
</dbReference>
<dbReference type="RefSeq" id="WP_012712005.1">
    <property type="nucleotide sequence ID" value="NC_012726.1"/>
</dbReference>
<dbReference type="SMR" id="C4KJ83"/>
<dbReference type="KEGG" id="sid:M164_2045"/>
<dbReference type="HOGENOM" id="CLU_023334_0_0_2"/>
<dbReference type="Proteomes" id="UP000001479">
    <property type="component" value="Chromosome"/>
</dbReference>
<dbReference type="GO" id="GO:0005737">
    <property type="term" value="C:cytoplasm"/>
    <property type="evidence" value="ECO:0007669"/>
    <property type="project" value="UniProtKB-SubCell"/>
</dbReference>
<dbReference type="GO" id="GO:0004519">
    <property type="term" value="F:endonuclease activity"/>
    <property type="evidence" value="ECO:0007669"/>
    <property type="project" value="UniProtKB-UniRule"/>
</dbReference>
<dbReference type="GO" id="GO:0046872">
    <property type="term" value="F:metal ion binding"/>
    <property type="evidence" value="ECO:0007669"/>
    <property type="project" value="UniProtKB-UniRule"/>
</dbReference>
<dbReference type="GO" id="GO:0070651">
    <property type="term" value="P:nonfunctional rRNA decay"/>
    <property type="evidence" value="ECO:0007669"/>
    <property type="project" value="TreeGrafter"/>
</dbReference>
<dbReference type="GO" id="GO:0070966">
    <property type="term" value="P:nuclear-transcribed mRNA catabolic process, no-go decay"/>
    <property type="evidence" value="ECO:0007669"/>
    <property type="project" value="InterPro"/>
</dbReference>
<dbReference type="GO" id="GO:0070481">
    <property type="term" value="P:nuclear-transcribed mRNA catabolic process, non-stop decay"/>
    <property type="evidence" value="ECO:0007669"/>
    <property type="project" value="InterPro"/>
</dbReference>
<dbReference type="GO" id="GO:0032790">
    <property type="term" value="P:ribosome disassembly"/>
    <property type="evidence" value="ECO:0007669"/>
    <property type="project" value="TreeGrafter"/>
</dbReference>
<dbReference type="GO" id="GO:0071025">
    <property type="term" value="P:RNA surveillance"/>
    <property type="evidence" value="ECO:0007669"/>
    <property type="project" value="InterPro"/>
</dbReference>
<dbReference type="FunFam" id="2.30.30.870:FF:000002">
    <property type="entry name" value="Protein pelota homolog"/>
    <property type="match status" value="1"/>
</dbReference>
<dbReference type="FunFam" id="3.30.420.60:FF:000005">
    <property type="entry name" value="Protein pelota homolog"/>
    <property type="match status" value="1"/>
</dbReference>
<dbReference type="Gene3D" id="3.30.1330.30">
    <property type="match status" value="1"/>
</dbReference>
<dbReference type="Gene3D" id="3.30.420.60">
    <property type="entry name" value="eRF1 domain 2"/>
    <property type="match status" value="1"/>
</dbReference>
<dbReference type="Gene3D" id="2.30.30.870">
    <property type="entry name" value="Pelota, domain A"/>
    <property type="match status" value="1"/>
</dbReference>
<dbReference type="HAMAP" id="MF_01853">
    <property type="entry name" value="PelO"/>
    <property type="match status" value="1"/>
</dbReference>
<dbReference type="InterPro" id="IPR042226">
    <property type="entry name" value="eFR1_2_sf"/>
</dbReference>
<dbReference type="InterPro" id="IPR005140">
    <property type="entry name" value="eRF1_1_Pelota"/>
</dbReference>
<dbReference type="InterPro" id="IPR005142">
    <property type="entry name" value="eRF1_3"/>
</dbReference>
<dbReference type="InterPro" id="IPR038069">
    <property type="entry name" value="Pelota/DOM34_N"/>
</dbReference>
<dbReference type="InterPro" id="IPR023521">
    <property type="entry name" value="Pelota_arc"/>
</dbReference>
<dbReference type="InterPro" id="IPR029064">
    <property type="entry name" value="Ribosomal_eL30-like_sf"/>
</dbReference>
<dbReference type="InterPro" id="IPR004405">
    <property type="entry name" value="Transl-rel_pelota"/>
</dbReference>
<dbReference type="NCBIfam" id="TIGR00111">
    <property type="entry name" value="pelota"/>
    <property type="match status" value="1"/>
</dbReference>
<dbReference type="PANTHER" id="PTHR10853">
    <property type="entry name" value="PELOTA"/>
    <property type="match status" value="1"/>
</dbReference>
<dbReference type="PANTHER" id="PTHR10853:SF0">
    <property type="entry name" value="PROTEIN PELOTA HOMOLOG"/>
    <property type="match status" value="1"/>
</dbReference>
<dbReference type="Pfam" id="PF03463">
    <property type="entry name" value="eRF1_1"/>
    <property type="match status" value="1"/>
</dbReference>
<dbReference type="Pfam" id="PF03465">
    <property type="entry name" value="eRF1_3"/>
    <property type="match status" value="1"/>
</dbReference>
<dbReference type="SMART" id="SM01194">
    <property type="entry name" value="eRF1_1"/>
    <property type="match status" value="1"/>
</dbReference>
<dbReference type="SUPFAM" id="SSF159065">
    <property type="entry name" value="Dom34/Pelota N-terminal domain-like"/>
    <property type="match status" value="1"/>
</dbReference>
<dbReference type="SUPFAM" id="SSF55315">
    <property type="entry name" value="L30e-like"/>
    <property type="match status" value="1"/>
</dbReference>
<dbReference type="SUPFAM" id="SSF53137">
    <property type="entry name" value="Translational machinery components"/>
    <property type="match status" value="1"/>
</dbReference>
<keyword id="KW-0963">Cytoplasm</keyword>
<keyword id="KW-0255">Endonuclease</keyword>
<keyword id="KW-0378">Hydrolase</keyword>
<keyword id="KW-0479">Metal-binding</keyword>
<keyword id="KW-0540">Nuclease</keyword>
<organism>
    <name type="scientific">Saccharolobus islandicus (strain M.16.4 / Kamchatka #3)</name>
    <name type="common">Sulfolobus islandicus</name>
    <dbReference type="NCBI Taxonomy" id="426118"/>
    <lineage>
        <taxon>Archaea</taxon>
        <taxon>Thermoproteota</taxon>
        <taxon>Thermoprotei</taxon>
        <taxon>Sulfolobales</taxon>
        <taxon>Sulfolobaceae</taxon>
        <taxon>Saccharolobus</taxon>
    </lineage>
</organism>
<reference key="1">
    <citation type="journal article" date="2009" name="Proc. Natl. Acad. Sci. U.S.A.">
        <title>Biogeography of the Sulfolobus islandicus pan-genome.</title>
        <authorList>
            <person name="Reno M.L."/>
            <person name="Held N.L."/>
            <person name="Fields C.J."/>
            <person name="Burke P.V."/>
            <person name="Whitaker R.J."/>
        </authorList>
    </citation>
    <scope>NUCLEOTIDE SEQUENCE [LARGE SCALE GENOMIC DNA]</scope>
    <source>
        <strain>M.16.4 / Kamchatka #3</strain>
    </source>
</reference>
<sequence length="344" mass="39372">MRILEFDEKRQAAKLHIESEDDLWILHLILEKGDKVVAKTTRDIGLGKESRRIPMTIVLKVDYTEFQEFTNRLRIHGIIEDAPERFGIRGAHHTINLDIGDEIIIIKQQWSKYALDKLKKQADKRSKIIIALVDFDEYLIAIPFEQGIKILSEKSLRSLNEEEGIIEQNALEVATELAEYVKQYNPDAILLAGPGFFKEEVAKKVNNILKNKKVYIDSVSSATRAGLHEILKRDIIDKIMSDYEIAIGAKKMEKAMELLAKQPELVTYGLEQVKNAVEMGAVETVLLIEDLLSSNNQERLAIERILEDIENKRGEIILVPKESPIYFELKNLTGILAILRFRIN</sequence>
<protein>
    <recommendedName>
        <fullName evidence="1">Protein pelota homolog</fullName>
        <ecNumber evidence="1">3.1.-.-</ecNumber>
    </recommendedName>
</protein>
<feature type="chain" id="PRO_1000216139" description="Protein pelota homolog">
    <location>
        <begin position="1"/>
        <end position="344"/>
    </location>
</feature>
<proteinExistence type="inferred from homology"/>